<keyword id="KW-0472">Membrane</keyword>
<keyword id="KW-1185">Reference proteome</keyword>
<keyword id="KW-0812">Transmembrane</keyword>
<keyword id="KW-1133">Transmembrane helix</keyword>
<gene>
    <name type="ordered locus">MJ1403</name>
</gene>
<accession>Q58798</accession>
<name>Y1403_METJA</name>
<sequence length="374" mass="41002">MTVSHGGILEGSSRGGKMMDWLKNKKAISPILALLIVLGVTIVVGAVFYAWGSNLFGNSQEKTQAAVEGTATNMFYDAGAIRVAATCIDKIRYQDADDSDSWLGYPNGNGKIAKPSTSNGCYNSTYGTVFYDERFIVEIPVTIDTQDYKLTGVKVVGGIPKIVDMGGTYTNAFEDISAKFYAFWLHLNDNYQLLKKDGTLFVGYVNKSGMFEVSNGYVIAWNQTRDTYGKLASSVGATSDSSWDAVNTTTGVAPLVETSWPYYGTYCSNVKLYTATGEELKPGFGSGTLVAQWFCSSATYLDKLFNNPEYVVGTLPKNSEKTVKTYLFFNTLYLPNYKGSTNDGYVTFEVPLKVVSNEGVTKEVKVKFTVYDDE</sequence>
<proteinExistence type="predicted"/>
<reference key="1">
    <citation type="journal article" date="1996" name="Science">
        <title>Complete genome sequence of the methanogenic archaeon, Methanococcus jannaschii.</title>
        <authorList>
            <person name="Bult C.J."/>
            <person name="White O."/>
            <person name="Olsen G.J."/>
            <person name="Zhou L."/>
            <person name="Fleischmann R.D."/>
            <person name="Sutton G.G."/>
            <person name="Blake J.A."/>
            <person name="FitzGerald L.M."/>
            <person name="Clayton R.A."/>
            <person name="Gocayne J.D."/>
            <person name="Kerlavage A.R."/>
            <person name="Dougherty B.A."/>
            <person name="Tomb J.-F."/>
            <person name="Adams M.D."/>
            <person name="Reich C.I."/>
            <person name="Overbeek R."/>
            <person name="Kirkness E.F."/>
            <person name="Weinstock K.G."/>
            <person name="Merrick J.M."/>
            <person name="Glodek A."/>
            <person name="Scott J.L."/>
            <person name="Geoghagen N.S.M."/>
            <person name="Weidman J.F."/>
            <person name="Fuhrmann J.L."/>
            <person name="Nguyen D."/>
            <person name="Utterback T.R."/>
            <person name="Kelley J.M."/>
            <person name="Peterson J.D."/>
            <person name="Sadow P.W."/>
            <person name="Hanna M.C."/>
            <person name="Cotton M.D."/>
            <person name="Roberts K.M."/>
            <person name="Hurst M.A."/>
            <person name="Kaine B.P."/>
            <person name="Borodovsky M."/>
            <person name="Klenk H.-P."/>
            <person name="Fraser C.M."/>
            <person name="Smith H.O."/>
            <person name="Woese C.R."/>
            <person name="Venter J.C."/>
        </authorList>
    </citation>
    <scope>NUCLEOTIDE SEQUENCE [LARGE SCALE GENOMIC DNA]</scope>
    <source>
        <strain>ATCC 43067 / DSM 2661 / JAL-1 / JCM 10045 / NBRC 100440</strain>
    </source>
</reference>
<protein>
    <recommendedName>
        <fullName>Uncharacterized protein MJ1403</fullName>
    </recommendedName>
</protein>
<organism>
    <name type="scientific">Methanocaldococcus jannaschii (strain ATCC 43067 / DSM 2661 / JAL-1 / JCM 10045 / NBRC 100440)</name>
    <name type="common">Methanococcus jannaschii</name>
    <dbReference type="NCBI Taxonomy" id="243232"/>
    <lineage>
        <taxon>Archaea</taxon>
        <taxon>Methanobacteriati</taxon>
        <taxon>Methanobacteriota</taxon>
        <taxon>Methanomada group</taxon>
        <taxon>Methanococci</taxon>
        <taxon>Methanococcales</taxon>
        <taxon>Methanocaldococcaceae</taxon>
        <taxon>Methanocaldococcus</taxon>
    </lineage>
</organism>
<evidence type="ECO:0000255" key="1"/>
<evidence type="ECO:0000305" key="2"/>
<comment type="subcellular location">
    <subcellularLocation>
        <location evidence="2">Membrane</location>
        <topology evidence="2">Single-pass membrane protein</topology>
    </subcellularLocation>
</comment>
<feature type="chain" id="PRO_0000107312" description="Uncharacterized protein MJ1403">
    <location>
        <begin position="1"/>
        <end position="374"/>
    </location>
</feature>
<feature type="transmembrane region" description="Helical" evidence="1">
    <location>
        <begin position="27"/>
        <end position="49"/>
    </location>
</feature>
<dbReference type="EMBL" id="L77117">
    <property type="protein sequence ID" value="AAB99413.1"/>
    <property type="molecule type" value="Genomic_DNA"/>
</dbReference>
<dbReference type="PIR" id="B64475">
    <property type="entry name" value="B64475"/>
</dbReference>
<dbReference type="SMR" id="Q58798"/>
<dbReference type="PaxDb" id="243232-MJ_1403"/>
<dbReference type="EnsemblBacteria" id="AAB99413">
    <property type="protein sequence ID" value="AAB99413"/>
    <property type="gene ID" value="MJ_1403"/>
</dbReference>
<dbReference type="KEGG" id="mja:MJ_1403"/>
<dbReference type="eggNOG" id="arCOG05987">
    <property type="taxonomic scope" value="Archaea"/>
</dbReference>
<dbReference type="HOGENOM" id="CLU_775263_0_0_2"/>
<dbReference type="InParanoid" id="Q58798"/>
<dbReference type="OrthoDB" id="65160at2157"/>
<dbReference type="Proteomes" id="UP000000805">
    <property type="component" value="Chromosome"/>
</dbReference>
<dbReference type="GO" id="GO:0016020">
    <property type="term" value="C:membrane"/>
    <property type="evidence" value="ECO:0007669"/>
    <property type="project" value="UniProtKB-SubCell"/>
</dbReference>
<dbReference type="InterPro" id="IPR013373">
    <property type="entry name" value="Flagellin/pilin_N_arc"/>
</dbReference>
<dbReference type="NCBIfam" id="TIGR02537">
    <property type="entry name" value="arch_flag_Nterm"/>
    <property type="match status" value="1"/>
</dbReference>